<gene>
    <name type="primary">pyrDA</name>
    <name type="synonym">pydA</name>
    <name type="ordered locus">LL1552</name>
    <name type="ORF">L192589</name>
</gene>
<sequence length="311" mass="34231">MLKTTFANAEFANPFMNASGVHCMTTEDLEELKASQAGAYITKSSTLEKREGNPLPRYVDLELGSINSMGLPNLGFDYYLDYVLKNQKEKAQEAPIFFSIAGMSAAENIAMLKKIQESNFSGITELNLSCPNVPGKPQLAYDFEATEKLLKEVFTFFTKPLGVKLPPYFDLVHFDIMAEILNQFPLTYVNSVNSIGNGLFIDSEAESVVIKPKDGFGGIGGAYIKPTALANVRAFYTRLKPEIKIIGTGGIETGQDAFEHLLCGATMLQIGTALHKEGPAIFDRIIKELEEIMDKKGYQSIADFHGKLKSL</sequence>
<name>PYRDA_LACLA</name>
<protein>
    <recommendedName>
        <fullName>Dihydroorotate dehydrogenase A (fumarate)</fullName>
        <shortName>DHOD A</shortName>
        <shortName>DHODase A</shortName>
        <shortName>DHOdehase A</shortName>
        <ecNumber>1.3.98.1</ecNumber>
    </recommendedName>
</protein>
<proteinExistence type="inferred from homology"/>
<dbReference type="EC" id="1.3.98.1"/>
<dbReference type="EMBL" id="AE005176">
    <property type="protein sequence ID" value="AAK05650.1"/>
    <property type="molecule type" value="Genomic_DNA"/>
</dbReference>
<dbReference type="PIR" id="H86818">
    <property type="entry name" value="H86818"/>
</dbReference>
<dbReference type="RefSeq" id="NP_267708.1">
    <property type="nucleotide sequence ID" value="NC_002662.1"/>
</dbReference>
<dbReference type="RefSeq" id="WP_003130679.1">
    <property type="nucleotide sequence ID" value="NC_002662.1"/>
</dbReference>
<dbReference type="SMR" id="Q9CFC9"/>
<dbReference type="PaxDb" id="272623-L192589"/>
<dbReference type="EnsemblBacteria" id="AAK05650">
    <property type="protein sequence ID" value="AAK05650"/>
    <property type="gene ID" value="L192589"/>
</dbReference>
<dbReference type="KEGG" id="lla:L192589"/>
<dbReference type="PATRIC" id="fig|272623.7.peg.1666"/>
<dbReference type="eggNOG" id="COG0167">
    <property type="taxonomic scope" value="Bacteria"/>
</dbReference>
<dbReference type="HOGENOM" id="CLU_042042_3_0_9"/>
<dbReference type="OrthoDB" id="9794954at2"/>
<dbReference type="SABIO-RK" id="Q9CFC9"/>
<dbReference type="UniPathway" id="UPA00070"/>
<dbReference type="Proteomes" id="UP000002196">
    <property type="component" value="Chromosome"/>
</dbReference>
<dbReference type="GO" id="GO:0005737">
    <property type="term" value="C:cytoplasm"/>
    <property type="evidence" value="ECO:0007669"/>
    <property type="project" value="UniProtKB-SubCell"/>
</dbReference>
<dbReference type="GO" id="GO:1990663">
    <property type="term" value="F:dihydroorotate dehydrogenase (fumarate) activity"/>
    <property type="evidence" value="ECO:0007669"/>
    <property type="project" value="UniProtKB-EC"/>
</dbReference>
<dbReference type="GO" id="GO:0006207">
    <property type="term" value="P:'de novo' pyrimidine nucleobase biosynthetic process"/>
    <property type="evidence" value="ECO:0007669"/>
    <property type="project" value="InterPro"/>
</dbReference>
<dbReference type="GO" id="GO:0044205">
    <property type="term" value="P:'de novo' UMP biosynthetic process"/>
    <property type="evidence" value="ECO:0007669"/>
    <property type="project" value="UniProtKB-UniRule"/>
</dbReference>
<dbReference type="CDD" id="cd04741">
    <property type="entry name" value="DHOD_1A_like"/>
    <property type="match status" value="1"/>
</dbReference>
<dbReference type="FunFam" id="3.20.20.70:FF:000027">
    <property type="entry name" value="Dihydropyrimidine dehydrogenase [NADP(+)]"/>
    <property type="match status" value="1"/>
</dbReference>
<dbReference type="Gene3D" id="3.20.20.70">
    <property type="entry name" value="Aldolase class I"/>
    <property type="match status" value="1"/>
</dbReference>
<dbReference type="Gene3D" id="2.30.26.10">
    <property type="entry name" value="Dihydroorotate Dehydrogenase A, chain A, domain 2"/>
    <property type="match status" value="1"/>
</dbReference>
<dbReference type="HAMAP" id="MF_00224">
    <property type="entry name" value="DHO_dh_type1"/>
    <property type="match status" value="1"/>
</dbReference>
<dbReference type="InterPro" id="IPR013785">
    <property type="entry name" value="Aldolase_TIM"/>
</dbReference>
<dbReference type="InterPro" id="IPR050074">
    <property type="entry name" value="DHO_dehydrogenase"/>
</dbReference>
<dbReference type="InterPro" id="IPR033886">
    <property type="entry name" value="DHOD_1A"/>
</dbReference>
<dbReference type="InterPro" id="IPR023359">
    <property type="entry name" value="Dihydro_DH_chainA_dom2"/>
</dbReference>
<dbReference type="InterPro" id="IPR024920">
    <property type="entry name" value="Dihydroorotate_DH_1"/>
</dbReference>
<dbReference type="InterPro" id="IPR012135">
    <property type="entry name" value="Dihydroorotate_DH_1_2"/>
</dbReference>
<dbReference type="InterPro" id="IPR005720">
    <property type="entry name" value="Dihydroorotate_DH_cat"/>
</dbReference>
<dbReference type="InterPro" id="IPR001295">
    <property type="entry name" value="Dihydroorotate_DH_CS"/>
</dbReference>
<dbReference type="NCBIfam" id="NF002702">
    <property type="entry name" value="PRK02506.1"/>
    <property type="match status" value="1"/>
</dbReference>
<dbReference type="PANTHER" id="PTHR48109:SF1">
    <property type="entry name" value="DIHYDROOROTATE DEHYDROGENASE (FUMARATE)"/>
    <property type="match status" value="1"/>
</dbReference>
<dbReference type="PANTHER" id="PTHR48109">
    <property type="entry name" value="DIHYDROOROTATE DEHYDROGENASE (QUINONE), MITOCHONDRIAL-RELATED"/>
    <property type="match status" value="1"/>
</dbReference>
<dbReference type="Pfam" id="PF01180">
    <property type="entry name" value="DHO_dh"/>
    <property type="match status" value="1"/>
</dbReference>
<dbReference type="PIRSF" id="PIRSF000164">
    <property type="entry name" value="DHO_oxidase"/>
    <property type="match status" value="1"/>
</dbReference>
<dbReference type="SUPFAM" id="SSF51395">
    <property type="entry name" value="FMN-linked oxidoreductases"/>
    <property type="match status" value="1"/>
</dbReference>
<dbReference type="PROSITE" id="PS00911">
    <property type="entry name" value="DHODEHASE_1"/>
    <property type="match status" value="1"/>
</dbReference>
<dbReference type="PROSITE" id="PS00912">
    <property type="entry name" value="DHODEHASE_2"/>
    <property type="match status" value="1"/>
</dbReference>
<keyword id="KW-0963">Cytoplasm</keyword>
<keyword id="KW-0285">Flavoprotein</keyword>
<keyword id="KW-0288">FMN</keyword>
<keyword id="KW-0560">Oxidoreductase</keyword>
<keyword id="KW-0665">Pyrimidine biosynthesis</keyword>
<keyword id="KW-1185">Reference proteome</keyword>
<comment type="function">
    <text evidence="1">Catalyzes the conversion of dihydroorotate to orotate with fumarate as the electron acceptor.</text>
</comment>
<comment type="catalytic activity">
    <reaction>
        <text>(S)-dihydroorotate + fumarate = orotate + succinate</text>
        <dbReference type="Rhea" id="RHEA:30059"/>
        <dbReference type="ChEBI" id="CHEBI:29806"/>
        <dbReference type="ChEBI" id="CHEBI:30031"/>
        <dbReference type="ChEBI" id="CHEBI:30839"/>
        <dbReference type="ChEBI" id="CHEBI:30864"/>
        <dbReference type="EC" id="1.3.98.1"/>
    </reaction>
</comment>
<comment type="cofactor">
    <cofactor evidence="1">
        <name>FMN</name>
        <dbReference type="ChEBI" id="CHEBI:58210"/>
    </cofactor>
    <text evidence="1">Binds 1 FMN per subunit.</text>
</comment>
<comment type="pathway">
    <text>Pyrimidine metabolism; UMP biosynthesis via de novo pathway.</text>
</comment>
<comment type="subunit">
    <text evidence="1">Homodimer.</text>
</comment>
<comment type="subcellular location">
    <subcellularLocation>
        <location evidence="1">Cytoplasm</location>
    </subcellularLocation>
</comment>
<comment type="similarity">
    <text evidence="2">Belongs to the dihydroorotate dehydrogenase family. Type 1 subfamily.</text>
</comment>
<accession>Q9CFC9</accession>
<reference key="1">
    <citation type="journal article" date="2001" name="Genome Res.">
        <title>The complete genome sequence of the lactic acid bacterium Lactococcus lactis ssp. lactis IL1403.</title>
        <authorList>
            <person name="Bolotin A."/>
            <person name="Wincker P."/>
            <person name="Mauger S."/>
            <person name="Jaillon O."/>
            <person name="Malarme K."/>
            <person name="Weissenbach J."/>
            <person name="Ehrlich S.D."/>
            <person name="Sorokin A."/>
        </authorList>
    </citation>
    <scope>NUCLEOTIDE SEQUENCE [LARGE SCALE GENOMIC DNA]</scope>
    <source>
        <strain>IL1403</strain>
    </source>
</reference>
<evidence type="ECO:0000250" key="1"/>
<evidence type="ECO:0000305" key="2"/>
<organism>
    <name type="scientific">Lactococcus lactis subsp. lactis (strain IL1403)</name>
    <name type="common">Streptococcus lactis</name>
    <dbReference type="NCBI Taxonomy" id="272623"/>
    <lineage>
        <taxon>Bacteria</taxon>
        <taxon>Bacillati</taxon>
        <taxon>Bacillota</taxon>
        <taxon>Bacilli</taxon>
        <taxon>Lactobacillales</taxon>
        <taxon>Streptococcaceae</taxon>
        <taxon>Lactococcus</taxon>
    </lineage>
</organism>
<feature type="chain" id="PRO_0000148393" description="Dihydroorotate dehydrogenase A (fumarate)">
    <location>
        <begin position="1"/>
        <end position="311"/>
    </location>
</feature>
<feature type="active site" description="Nucleophile">
    <location>
        <position position="130"/>
    </location>
</feature>
<feature type="binding site" evidence="1">
    <location>
        <position position="19"/>
    </location>
    <ligand>
        <name>FMN</name>
        <dbReference type="ChEBI" id="CHEBI:58210"/>
    </ligand>
</feature>
<feature type="binding site" evidence="1">
    <location>
        <begin position="43"/>
        <end position="44"/>
    </location>
    <ligand>
        <name>FMN</name>
        <dbReference type="ChEBI" id="CHEBI:58210"/>
    </ligand>
</feature>
<feature type="binding site" evidence="1">
    <location>
        <position position="43"/>
    </location>
    <ligand>
        <name>substrate</name>
    </ligand>
</feature>
<feature type="binding site" evidence="1">
    <location>
        <begin position="67"/>
        <end position="71"/>
    </location>
    <ligand>
        <name>substrate</name>
    </ligand>
</feature>
<feature type="binding site" evidence="1">
    <location>
        <position position="127"/>
    </location>
    <ligand>
        <name>FMN</name>
        <dbReference type="ChEBI" id="CHEBI:58210"/>
    </ligand>
</feature>
<feature type="binding site" evidence="1">
    <location>
        <position position="127"/>
    </location>
    <ligand>
        <name>substrate</name>
    </ligand>
</feature>
<feature type="binding site" evidence="1">
    <location>
        <position position="164"/>
    </location>
    <ligand>
        <name>FMN</name>
        <dbReference type="ChEBI" id="CHEBI:58210"/>
    </ligand>
</feature>
<feature type="binding site" evidence="1">
    <location>
        <position position="192"/>
    </location>
    <ligand>
        <name>FMN</name>
        <dbReference type="ChEBI" id="CHEBI:58210"/>
    </ligand>
</feature>
<feature type="binding site" evidence="1">
    <location>
        <begin position="193"/>
        <end position="194"/>
    </location>
    <ligand>
        <name>substrate</name>
    </ligand>
</feature>
<feature type="binding site" evidence="1">
    <location>
        <position position="221"/>
    </location>
    <ligand>
        <name>FMN</name>
        <dbReference type="ChEBI" id="CHEBI:58210"/>
    </ligand>
</feature>
<feature type="binding site" evidence="1">
    <location>
        <begin position="249"/>
        <end position="250"/>
    </location>
    <ligand>
        <name>FMN</name>
        <dbReference type="ChEBI" id="CHEBI:58210"/>
    </ligand>
</feature>
<feature type="binding site" evidence="1">
    <location>
        <begin position="271"/>
        <end position="272"/>
    </location>
    <ligand>
        <name>FMN</name>
        <dbReference type="ChEBI" id="CHEBI:58210"/>
    </ligand>
</feature>